<name>CRVP_GLOBL</name>
<reference key="1">
    <citation type="journal article" date="2002" name="Eur. J. Biochem.">
        <title>Cloning and characterization of novel snake venom proteins that block smooth muscle contraction.</title>
        <authorList>
            <person name="Yamazaki Y."/>
            <person name="Koike H."/>
            <person name="Sugiyama Y."/>
            <person name="Motoyoshi K."/>
            <person name="Wada T."/>
            <person name="Hishinuma S."/>
            <person name="Mita M."/>
            <person name="Morita T."/>
        </authorList>
    </citation>
    <scope>NUCLEOTIDE SEQUENCE [MRNA]</scope>
    <scope>PROTEIN SEQUENCE OF 20-59; 121-172; 176-205 AND 209-204</scope>
    <scope>FUNCTION</scope>
    <source>
        <tissue>Venom</tissue>
        <tissue>Venom gland</tissue>
    </source>
</reference>
<reference key="2">
    <citation type="journal article" date="2003" name="Arch. Biochem. Biophys.">
        <title>Wide distribution of cysteine-rich secretory proteins in snake venoms: isolation and cloning of novel snake venom cysteine-rich secretory proteins.</title>
        <authorList>
            <person name="Yamazaki Y."/>
            <person name="Hyodo F."/>
            <person name="Morita T."/>
        </authorList>
    </citation>
    <scope>FUNCTION</scope>
</reference>
<keyword id="KW-0108">Calcium channel impairing toxin</keyword>
<keyword id="KW-0903">Direct protein sequencing</keyword>
<keyword id="KW-1015">Disulfide bond</keyword>
<keyword id="KW-0872">Ion channel impairing toxin</keyword>
<keyword id="KW-0528">Neurotoxin</keyword>
<keyword id="KW-0964">Secreted</keyword>
<keyword id="KW-0732">Signal</keyword>
<keyword id="KW-0800">Toxin</keyword>
<keyword id="KW-1218">Voltage-gated calcium channel impairing toxin</keyword>
<evidence type="ECO:0000255" key="1">
    <source>
        <dbReference type="PROSITE-ProRule" id="PRU01005"/>
    </source>
</evidence>
<evidence type="ECO:0000269" key="2">
    <source>
    </source>
</evidence>
<evidence type="ECO:0000269" key="3">
    <source>
    </source>
</evidence>
<evidence type="ECO:0000305" key="4"/>
<comment type="function">
    <text evidence="2 3">Blocks contraction of smooth muscle elicited by high potassium-induced depolarization, but does not block caffeine-stimulated contraction. Since high potassium-treatment activates voltage-gated channels and caffeine exposure activates ryanodine receptors, this toxin may target L-type voltage-gated calcium channels (Cav) (and not ryanodine receptors) on smooth muscle (PubMed:12047379). This toxin also shows a little inhibition on cyclic nucleotide-gated CNGA1 channel (PubMed:12646276).</text>
</comment>
<comment type="subcellular location">
    <subcellularLocation>
        <location>Secreted</location>
    </subcellularLocation>
</comment>
<comment type="tissue specificity">
    <text>Expressed by the venom gland.</text>
</comment>
<comment type="similarity">
    <text evidence="4">Belongs to the CRISP family.</text>
</comment>
<accession>Q8JI40</accession>
<feature type="signal peptide" evidence="2">
    <location>
        <begin position="1"/>
        <end position="19"/>
    </location>
</feature>
<feature type="chain" id="PRO_0000006273" description="Cysteine-rich venom protein ablomin">
    <location>
        <begin position="20"/>
        <end position="240"/>
    </location>
</feature>
<feature type="domain" description="SCP">
    <location>
        <begin position="38"/>
        <end position="166"/>
    </location>
</feature>
<feature type="domain" description="ShKT" evidence="1">
    <location>
        <begin position="202"/>
        <end position="235"/>
    </location>
</feature>
<feature type="disulfide bond" evidence="1">
    <location>
        <begin position="75"/>
        <end position="153"/>
    </location>
</feature>
<feature type="disulfide bond" evidence="1">
    <location>
        <begin position="92"/>
        <end position="167"/>
    </location>
</feature>
<feature type="disulfide bond" evidence="1">
    <location>
        <begin position="148"/>
        <end position="164"/>
    </location>
</feature>
<feature type="disulfide bond" evidence="1">
    <location>
        <begin position="186"/>
        <end position="193"/>
    </location>
</feature>
<feature type="disulfide bond" evidence="1">
    <location>
        <begin position="189"/>
        <end position="198"/>
    </location>
</feature>
<feature type="disulfide bond" evidence="1">
    <location>
        <begin position="202"/>
        <end position="235"/>
    </location>
</feature>
<feature type="disulfide bond" evidence="1">
    <location>
        <begin position="211"/>
        <end position="229"/>
    </location>
</feature>
<feature type="disulfide bond" evidence="1">
    <location>
        <begin position="220"/>
        <end position="233"/>
    </location>
</feature>
<sequence length="240" mass="26914">MIVFIVLPILAAVLQQSSGNVDFDSESPRKPEIQNEIVDLHNSLRRSVNPTASNMLKMEWYPEAAANAERWAYRCIEDHSSPDSRVLEGIKCGENIYMSPIPMKWTDIIHIWHDEYKNFKYGIGADPPNAVSGHFTQIVWYKSYRAGCAAAYCPSSEYSYFYVCQYCPAGNMRGKTATPYTSGPPCGDCPSACDNGLCTNPCTQEDVFTNCNSLVQQSNCQHNYIKTNCPASCFCHNEIK</sequence>
<protein>
    <recommendedName>
        <fullName>Cysteine-rich venom protein ablomin</fullName>
    </recommendedName>
</protein>
<dbReference type="EMBL" id="AF384218">
    <property type="protein sequence ID" value="AAM45664.1"/>
    <property type="molecule type" value="mRNA"/>
</dbReference>
<dbReference type="SMR" id="Q8JI40"/>
<dbReference type="GO" id="GO:0005576">
    <property type="term" value="C:extracellular region"/>
    <property type="evidence" value="ECO:0007669"/>
    <property type="project" value="UniProtKB-SubCell"/>
</dbReference>
<dbReference type="GO" id="GO:0005246">
    <property type="term" value="F:calcium channel regulator activity"/>
    <property type="evidence" value="ECO:0007669"/>
    <property type="project" value="UniProtKB-KW"/>
</dbReference>
<dbReference type="GO" id="GO:0090729">
    <property type="term" value="F:toxin activity"/>
    <property type="evidence" value="ECO:0007669"/>
    <property type="project" value="UniProtKB-KW"/>
</dbReference>
<dbReference type="CDD" id="cd05383">
    <property type="entry name" value="CAP_CRISP"/>
    <property type="match status" value="1"/>
</dbReference>
<dbReference type="FunFam" id="1.10.10.740:FF:000001">
    <property type="entry name" value="Cysteine-rich secretory protein 2"/>
    <property type="match status" value="1"/>
</dbReference>
<dbReference type="FunFam" id="3.40.33.10:FF:000005">
    <property type="entry name" value="Cysteine-rich secretory protein 2"/>
    <property type="match status" value="1"/>
</dbReference>
<dbReference type="Gene3D" id="3.40.33.10">
    <property type="entry name" value="CAP"/>
    <property type="match status" value="1"/>
</dbReference>
<dbReference type="Gene3D" id="1.10.10.740">
    <property type="entry name" value="Crisp domain"/>
    <property type="match status" value="1"/>
</dbReference>
<dbReference type="InterPro" id="IPR018244">
    <property type="entry name" value="Allrgn_V5/Tpx1_CS"/>
</dbReference>
<dbReference type="InterPro" id="IPR014044">
    <property type="entry name" value="CAP_dom"/>
</dbReference>
<dbReference type="InterPro" id="IPR035940">
    <property type="entry name" value="CAP_sf"/>
</dbReference>
<dbReference type="InterPro" id="IPR042076">
    <property type="entry name" value="Crisp-like_dom"/>
</dbReference>
<dbReference type="InterPro" id="IPR001283">
    <property type="entry name" value="CRISP-related"/>
</dbReference>
<dbReference type="InterPro" id="IPR013871">
    <property type="entry name" value="Cysteine_rich_secretory"/>
</dbReference>
<dbReference type="InterPro" id="IPR034117">
    <property type="entry name" value="SCP_CRISP"/>
</dbReference>
<dbReference type="InterPro" id="IPR003582">
    <property type="entry name" value="ShKT_dom"/>
</dbReference>
<dbReference type="InterPro" id="IPR002413">
    <property type="entry name" value="V5_allergen-like"/>
</dbReference>
<dbReference type="PANTHER" id="PTHR10334">
    <property type="entry name" value="CYSTEINE-RICH SECRETORY PROTEIN-RELATED"/>
    <property type="match status" value="1"/>
</dbReference>
<dbReference type="Pfam" id="PF00188">
    <property type="entry name" value="CAP"/>
    <property type="match status" value="1"/>
</dbReference>
<dbReference type="Pfam" id="PF08562">
    <property type="entry name" value="Crisp"/>
    <property type="match status" value="1"/>
</dbReference>
<dbReference type="PRINTS" id="PR00838">
    <property type="entry name" value="V5ALLERGEN"/>
</dbReference>
<dbReference type="PRINTS" id="PR00837">
    <property type="entry name" value="V5TPXLIKE"/>
</dbReference>
<dbReference type="SMART" id="SM00198">
    <property type="entry name" value="SCP"/>
    <property type="match status" value="1"/>
</dbReference>
<dbReference type="SUPFAM" id="SSF57546">
    <property type="entry name" value="Crisp domain-like"/>
    <property type="match status" value="1"/>
</dbReference>
<dbReference type="SUPFAM" id="SSF55797">
    <property type="entry name" value="PR-1-like"/>
    <property type="match status" value="1"/>
</dbReference>
<dbReference type="PROSITE" id="PS01009">
    <property type="entry name" value="CRISP_1"/>
    <property type="match status" value="1"/>
</dbReference>
<dbReference type="PROSITE" id="PS01010">
    <property type="entry name" value="CRISP_2"/>
    <property type="match status" value="1"/>
</dbReference>
<dbReference type="PROSITE" id="PS51670">
    <property type="entry name" value="SHKT"/>
    <property type="match status" value="1"/>
</dbReference>
<proteinExistence type="evidence at protein level"/>
<organism>
    <name type="scientific">Gloydius blomhoffii</name>
    <name type="common">Mamushi</name>
    <name type="synonym">Agkistrodon halys blomhoffi</name>
    <dbReference type="NCBI Taxonomy" id="242054"/>
    <lineage>
        <taxon>Eukaryota</taxon>
        <taxon>Metazoa</taxon>
        <taxon>Chordata</taxon>
        <taxon>Craniata</taxon>
        <taxon>Vertebrata</taxon>
        <taxon>Euteleostomi</taxon>
        <taxon>Lepidosauria</taxon>
        <taxon>Squamata</taxon>
        <taxon>Bifurcata</taxon>
        <taxon>Unidentata</taxon>
        <taxon>Episquamata</taxon>
        <taxon>Toxicofera</taxon>
        <taxon>Serpentes</taxon>
        <taxon>Colubroidea</taxon>
        <taxon>Viperidae</taxon>
        <taxon>Crotalinae</taxon>
        <taxon>Gloydius</taxon>
    </lineage>
</organism>